<proteinExistence type="inferred from homology"/>
<keyword id="KW-0143">Chaperone</keyword>
<keyword id="KW-0574">Periplasm</keyword>
<keyword id="KW-1185">Reference proteome</keyword>
<keyword id="KW-0732">Signal</keyword>
<gene>
    <name type="primary">skp</name>
    <name type="synonym">hlpA</name>
    <name type="ordered locus">SF0168</name>
    <name type="ordered locus">S0171</name>
</gene>
<name>SKP_SHIFL</name>
<reference key="1">
    <citation type="journal article" date="2002" name="Nucleic Acids Res.">
        <title>Genome sequence of Shigella flexneri 2a: insights into pathogenicity through comparison with genomes of Escherichia coli K12 and O157.</title>
        <authorList>
            <person name="Jin Q."/>
            <person name="Yuan Z."/>
            <person name="Xu J."/>
            <person name="Wang Y."/>
            <person name="Shen Y."/>
            <person name="Lu W."/>
            <person name="Wang J."/>
            <person name="Liu H."/>
            <person name="Yang J."/>
            <person name="Yang F."/>
            <person name="Zhang X."/>
            <person name="Zhang J."/>
            <person name="Yang G."/>
            <person name="Wu H."/>
            <person name="Qu D."/>
            <person name="Dong J."/>
            <person name="Sun L."/>
            <person name="Xue Y."/>
            <person name="Zhao A."/>
            <person name="Gao Y."/>
            <person name="Zhu J."/>
            <person name="Kan B."/>
            <person name="Ding K."/>
            <person name="Chen S."/>
            <person name="Cheng H."/>
            <person name="Yao Z."/>
            <person name="He B."/>
            <person name="Chen R."/>
            <person name="Ma D."/>
            <person name="Qiang B."/>
            <person name="Wen Y."/>
            <person name="Hou Y."/>
            <person name="Yu J."/>
        </authorList>
    </citation>
    <scope>NUCLEOTIDE SEQUENCE [LARGE SCALE GENOMIC DNA]</scope>
    <source>
        <strain>301 / Serotype 2a</strain>
    </source>
</reference>
<reference key="2">
    <citation type="journal article" date="2003" name="Infect. Immun.">
        <title>Complete genome sequence and comparative genomics of Shigella flexneri serotype 2a strain 2457T.</title>
        <authorList>
            <person name="Wei J."/>
            <person name="Goldberg M.B."/>
            <person name="Burland V."/>
            <person name="Venkatesan M.M."/>
            <person name="Deng W."/>
            <person name="Fournier G."/>
            <person name="Mayhew G.F."/>
            <person name="Plunkett G. III"/>
            <person name="Rose D.J."/>
            <person name="Darling A."/>
            <person name="Mau B."/>
            <person name="Perna N.T."/>
            <person name="Payne S.M."/>
            <person name="Runyen-Janecky L.J."/>
            <person name="Zhou S."/>
            <person name="Schwartz D.C."/>
            <person name="Blattner F.R."/>
        </authorList>
    </citation>
    <scope>NUCLEOTIDE SEQUENCE [LARGE SCALE GENOMIC DNA]</scope>
    <source>
        <strain>ATCC 700930 / 2457T / Serotype 2a</strain>
    </source>
</reference>
<sequence>MKKWLLAAGLGLALATSAQAADKIAIVNMGSLFQQVAQKTGVSNTLENEFKGRASELQRMETDLQAKMKKLQSMKAGSDRTKLEKDVMAQRQTFAQKAQAFEQDRARRSNEERGKLVTRIQTAVKSVANSQDIDLVVDANAVAYNSSDVKDITADVLKQVK</sequence>
<evidence type="ECO:0000250" key="1"/>
<evidence type="ECO:0000255" key="2"/>
<evidence type="ECO:0000305" key="3"/>
<protein>
    <recommendedName>
        <fullName>Chaperone protein Skp</fullName>
    </recommendedName>
</protein>
<dbReference type="EMBL" id="AE005674">
    <property type="protein sequence ID" value="AAN41830.1"/>
    <property type="molecule type" value="Genomic_DNA"/>
</dbReference>
<dbReference type="EMBL" id="AE014073">
    <property type="protein sequence ID" value="AAP15711.1"/>
    <property type="molecule type" value="Genomic_DNA"/>
</dbReference>
<dbReference type="RefSeq" id="NP_706123.1">
    <property type="nucleotide sequence ID" value="NC_004337.2"/>
</dbReference>
<dbReference type="RefSeq" id="WP_000758956.1">
    <property type="nucleotide sequence ID" value="NZ_WPGW01000006.1"/>
</dbReference>
<dbReference type="BMRB" id="P0AEV0"/>
<dbReference type="SMR" id="P0AEV0"/>
<dbReference type="STRING" id="198214.SF0168"/>
<dbReference type="PaxDb" id="198214-SF0168"/>
<dbReference type="GeneID" id="1024435"/>
<dbReference type="GeneID" id="93777247"/>
<dbReference type="KEGG" id="sfl:SF0168"/>
<dbReference type="KEGG" id="sfx:S0171"/>
<dbReference type="PATRIC" id="fig|198214.7.peg.190"/>
<dbReference type="HOGENOM" id="CLU_101388_2_0_6"/>
<dbReference type="Proteomes" id="UP000001006">
    <property type="component" value="Chromosome"/>
</dbReference>
<dbReference type="Proteomes" id="UP000002673">
    <property type="component" value="Chromosome"/>
</dbReference>
<dbReference type="GO" id="GO:0005829">
    <property type="term" value="C:cytosol"/>
    <property type="evidence" value="ECO:0007669"/>
    <property type="project" value="TreeGrafter"/>
</dbReference>
<dbReference type="GO" id="GO:0042597">
    <property type="term" value="C:periplasmic space"/>
    <property type="evidence" value="ECO:0007669"/>
    <property type="project" value="UniProtKB-SubCell"/>
</dbReference>
<dbReference type="GO" id="GO:0051082">
    <property type="term" value="F:unfolded protein binding"/>
    <property type="evidence" value="ECO:0007669"/>
    <property type="project" value="InterPro"/>
</dbReference>
<dbReference type="GO" id="GO:0061077">
    <property type="term" value="P:chaperone-mediated protein folding"/>
    <property type="evidence" value="ECO:0007669"/>
    <property type="project" value="TreeGrafter"/>
</dbReference>
<dbReference type="GO" id="GO:0050821">
    <property type="term" value="P:protein stabilization"/>
    <property type="evidence" value="ECO:0007669"/>
    <property type="project" value="TreeGrafter"/>
</dbReference>
<dbReference type="FunFam" id="3.30.910.20:FF:000001">
    <property type="entry name" value="Molecular chaperone Skp"/>
    <property type="match status" value="1"/>
</dbReference>
<dbReference type="Gene3D" id="3.30.910.20">
    <property type="entry name" value="Skp domain"/>
    <property type="match status" value="1"/>
</dbReference>
<dbReference type="InterPro" id="IPR005632">
    <property type="entry name" value="Chaperone_Skp"/>
</dbReference>
<dbReference type="InterPro" id="IPR024930">
    <property type="entry name" value="Skp_dom_sf"/>
</dbReference>
<dbReference type="NCBIfam" id="NF008047">
    <property type="entry name" value="PRK10780.1"/>
    <property type="match status" value="1"/>
</dbReference>
<dbReference type="PANTHER" id="PTHR35089">
    <property type="entry name" value="CHAPERONE PROTEIN SKP"/>
    <property type="match status" value="1"/>
</dbReference>
<dbReference type="PANTHER" id="PTHR35089:SF1">
    <property type="entry name" value="CHAPERONE PROTEIN SKP"/>
    <property type="match status" value="1"/>
</dbReference>
<dbReference type="Pfam" id="PF03938">
    <property type="entry name" value="OmpH"/>
    <property type="match status" value="1"/>
</dbReference>
<dbReference type="PIRSF" id="PIRSF002094">
    <property type="entry name" value="OMP26_Skp"/>
    <property type="match status" value="1"/>
</dbReference>
<dbReference type="SMART" id="SM00935">
    <property type="entry name" value="OmpH"/>
    <property type="match status" value="1"/>
</dbReference>
<dbReference type="SUPFAM" id="SSF111384">
    <property type="entry name" value="OmpH-like"/>
    <property type="match status" value="1"/>
</dbReference>
<accession>P0AEV0</accession>
<accession>P11457</accession>
<organism>
    <name type="scientific">Shigella flexneri</name>
    <dbReference type="NCBI Taxonomy" id="623"/>
    <lineage>
        <taxon>Bacteria</taxon>
        <taxon>Pseudomonadati</taxon>
        <taxon>Pseudomonadota</taxon>
        <taxon>Gammaproteobacteria</taxon>
        <taxon>Enterobacterales</taxon>
        <taxon>Enterobacteriaceae</taxon>
        <taxon>Shigella</taxon>
    </lineage>
</organism>
<comment type="function">
    <text evidence="1">Molecular chaperone that interacts specifically with outer membrane proteins, thus maintaining the solubility of early folding intermediates during passage through the periplasm.</text>
</comment>
<comment type="subunit">
    <text evidence="1">Homotrimer.</text>
</comment>
<comment type="subcellular location">
    <subcellularLocation>
        <location evidence="1">Periplasm</location>
    </subcellularLocation>
</comment>
<comment type="similarity">
    <text evidence="3">Belongs to the Skp family.</text>
</comment>
<feature type="signal peptide" evidence="1">
    <location>
        <begin position="1"/>
        <end position="20"/>
    </location>
</feature>
<feature type="chain" id="PRO_0000045055" description="Chaperone protein Skp">
    <location>
        <begin position="21"/>
        <end position="161"/>
    </location>
</feature>
<feature type="region of interest" description="Lipopolysaccharide binding" evidence="2">
    <location>
        <begin position="97"/>
        <end position="108"/>
    </location>
</feature>